<dbReference type="EMBL" id="BC142064">
    <property type="protein sequence ID" value="AAI42065.1"/>
    <property type="molecule type" value="mRNA"/>
</dbReference>
<dbReference type="RefSeq" id="NP_001092630.1">
    <property type="nucleotide sequence ID" value="NM_001099160.2"/>
</dbReference>
<dbReference type="PDB" id="8OTZ">
    <property type="method" value="EM"/>
    <property type="resolution" value="3.60 A"/>
    <property type="chains" value="Df/Dg/Dh=1-180"/>
</dbReference>
<dbReference type="PDBsum" id="8OTZ"/>
<dbReference type="EMDB" id="EMD-17187"/>
<dbReference type="EMDB" id="EMD-50664"/>
<dbReference type="SMR" id="A5PJD8"/>
<dbReference type="FunCoup" id="A5PJD8">
    <property type="interactions" value="106"/>
</dbReference>
<dbReference type="STRING" id="9913.ENSBTAP00000042722"/>
<dbReference type="PaxDb" id="9913-ENSBTAP00000042722"/>
<dbReference type="Ensembl" id="ENSBTAT00000045323.4">
    <property type="protein sequence ID" value="ENSBTAP00000042722.4"/>
    <property type="gene ID" value="ENSBTAG00000009033.6"/>
</dbReference>
<dbReference type="GeneID" id="616833"/>
<dbReference type="KEGG" id="bta:616833"/>
<dbReference type="CTD" id="616833"/>
<dbReference type="VEuPathDB" id="HostDB:ENSBTAG00000009033"/>
<dbReference type="VGNC" id="VGNC:35770">
    <property type="gene designation" value="SPMIP9"/>
</dbReference>
<dbReference type="eggNOG" id="ENOG502T74N">
    <property type="taxonomic scope" value="Eukaryota"/>
</dbReference>
<dbReference type="GeneTree" id="ENSGT00390000012177"/>
<dbReference type="HOGENOM" id="CLU_132395_0_0_1"/>
<dbReference type="InParanoid" id="A5PJD8"/>
<dbReference type="OMA" id="SYMVDYK"/>
<dbReference type="OrthoDB" id="9514831at2759"/>
<dbReference type="TreeFam" id="TF337872"/>
<dbReference type="Proteomes" id="UP000009136">
    <property type="component" value="Chromosome 11"/>
</dbReference>
<dbReference type="Bgee" id="ENSBTAG00000009033">
    <property type="expression patterns" value="Expressed in semen and 9 other cell types or tissues"/>
</dbReference>
<dbReference type="GO" id="GO:0160111">
    <property type="term" value="C:axonemal A tubule inner sheath"/>
    <property type="evidence" value="ECO:0007669"/>
    <property type="project" value="Ensembl"/>
</dbReference>
<dbReference type="GO" id="GO:0005737">
    <property type="term" value="C:cytoplasm"/>
    <property type="evidence" value="ECO:0000250"/>
    <property type="project" value="UniProtKB"/>
</dbReference>
<dbReference type="GO" id="GO:0005634">
    <property type="term" value="C:nucleus"/>
    <property type="evidence" value="ECO:0007669"/>
    <property type="project" value="UniProtKB-SubCell"/>
</dbReference>
<dbReference type="GO" id="GO:0036126">
    <property type="term" value="C:sperm flagellum"/>
    <property type="evidence" value="ECO:0007669"/>
    <property type="project" value="Ensembl"/>
</dbReference>
<dbReference type="GO" id="GO:0030317">
    <property type="term" value="P:flagellated sperm motility"/>
    <property type="evidence" value="ECO:0007669"/>
    <property type="project" value="Ensembl"/>
</dbReference>
<dbReference type="InterPro" id="IPR029361">
    <property type="entry name" value="SPMIP9"/>
</dbReference>
<dbReference type="PANTHER" id="PTHR36882">
    <property type="entry name" value="TESTIS-EXPRESSED SEQUENCE 37 PROTEIN"/>
    <property type="match status" value="1"/>
</dbReference>
<dbReference type="PANTHER" id="PTHR36882:SF1">
    <property type="entry name" value="TESTIS-EXPRESSED SEQUENCE 37 PROTEIN"/>
    <property type="match status" value="1"/>
</dbReference>
<dbReference type="Pfam" id="PF15217">
    <property type="entry name" value="TSC21"/>
    <property type="match status" value="1"/>
</dbReference>
<proteinExistence type="evidence at protein level"/>
<feature type="chain" id="PRO_0000304988" description="Protein SPMIP9">
    <location>
        <begin position="1"/>
        <end position="180"/>
    </location>
</feature>
<feature type="sequence conflict" description="In Ref. 2; AAI42065." evidence="4" ref="2">
    <original>K</original>
    <variation>R</variation>
    <location>
        <position position="26"/>
    </location>
</feature>
<feature type="sequence conflict" description="In Ref. 2; AAI42065." evidence="4" ref="2">
    <original>V</original>
    <variation>E</variation>
    <location>
        <position position="40"/>
    </location>
</feature>
<feature type="sequence conflict" description="In Ref. 2; AAI42065." evidence="4" ref="2">
    <original>R</original>
    <variation>Q</variation>
    <location>
        <position position="49"/>
    </location>
</feature>
<accession>A5PJD8</accession>
<accession>F1MZB5</accession>
<evidence type="ECO:0000250" key="1">
    <source>
        <dbReference type="UniProtKB" id="Q96LM6"/>
    </source>
</evidence>
<evidence type="ECO:0000250" key="2">
    <source>
        <dbReference type="UniProtKB" id="Q9DAG4"/>
    </source>
</evidence>
<evidence type="ECO:0000269" key="3">
    <source>
    </source>
</evidence>
<evidence type="ECO:0000305" key="4"/>
<evidence type="ECO:0007744" key="5">
    <source>
        <dbReference type="PDB" id="8OTZ"/>
    </source>
</evidence>
<keyword id="KW-0002">3D-structure</keyword>
<keyword id="KW-0966">Cell projection</keyword>
<keyword id="KW-0969">Cilium</keyword>
<keyword id="KW-0963">Cytoplasm</keyword>
<keyword id="KW-0206">Cytoskeleton</keyword>
<keyword id="KW-0282">Flagellum</keyword>
<keyword id="KW-0539">Nucleus</keyword>
<keyword id="KW-1185">Reference proteome</keyword>
<gene>
    <name type="primary">SPMIP9</name>
    <name type="synonym">TEX37</name>
    <name type="synonym">TSC21</name>
</gene>
<name>SMIP9_BOVIN</name>
<sequence>MSGVVFPGQAPVDLDIYQSSYMIDYKPYGKHKYARVTSEVQAKLDTQLRDKEFYRPTPSPNPKLEDGYPAFKRPHMTAKDLGQPGFFPPQGRVGPVEDEWRFTSTCPSVYPASHALYLAHGDPNRIQQSADFPCLLEPEHQPAPDVGKGYFLLPGCACTYHCTVKVPILNRWGPLMPFYQ</sequence>
<organism>
    <name type="scientific">Bos taurus</name>
    <name type="common">Bovine</name>
    <dbReference type="NCBI Taxonomy" id="9913"/>
    <lineage>
        <taxon>Eukaryota</taxon>
        <taxon>Metazoa</taxon>
        <taxon>Chordata</taxon>
        <taxon>Craniata</taxon>
        <taxon>Vertebrata</taxon>
        <taxon>Euteleostomi</taxon>
        <taxon>Mammalia</taxon>
        <taxon>Eutheria</taxon>
        <taxon>Laurasiatheria</taxon>
        <taxon>Artiodactyla</taxon>
        <taxon>Ruminantia</taxon>
        <taxon>Pecora</taxon>
        <taxon>Bovidae</taxon>
        <taxon>Bovinae</taxon>
        <taxon>Bos</taxon>
    </lineage>
</organism>
<protein>
    <recommendedName>
        <fullName evidence="4">Protein SPMIP9</fullName>
    </recommendedName>
    <alternativeName>
        <fullName>Sperm microtubule inner protein 9</fullName>
    </alternativeName>
    <alternativeName>
        <fullName>Testis-expressed sequence 37 protein</fullName>
    </alternativeName>
    <alternativeName>
        <fullName>Testis-specific conserved protein of 21 kDa</fullName>
    </alternativeName>
</protein>
<reference key="1">
    <citation type="submission" date="2018-03" db="EMBL/GenBank/DDBJ databases">
        <title>ARS-UCD1.2.</title>
        <authorList>
            <person name="Rosen B.D."/>
            <person name="Bickhart D.M."/>
            <person name="Koren S."/>
            <person name="Schnabel R.D."/>
            <person name="Hall R."/>
            <person name="Zimin A."/>
            <person name="Dreischer C."/>
            <person name="Schultheiss S."/>
            <person name="Schroeder S.G."/>
            <person name="Elsik C.G."/>
            <person name="Couldrey C."/>
            <person name="Liu G.E."/>
            <person name="Van Tassell C.P."/>
            <person name="Phillippy A.M."/>
            <person name="Smith T.P.L."/>
            <person name="Medrano J.F."/>
        </authorList>
    </citation>
    <scope>NUCLEOTIDE SEQUENCE [LARGE SCALE GENOMIC DNA]</scope>
    <source>
        <strain>Hereford</strain>
    </source>
</reference>
<reference key="2">
    <citation type="submission" date="2007-06" db="EMBL/GenBank/DDBJ databases">
        <authorList>
            <consortium name="NIH - Mammalian Gene Collection (MGC) project"/>
        </authorList>
    </citation>
    <scope>NUCLEOTIDE SEQUENCE [LARGE SCALE MRNA]</scope>
    <source>
        <strain>Crossbred X Angus</strain>
        <tissue>Liver</tissue>
    </source>
</reference>
<reference evidence="5" key="3">
    <citation type="journal article" date="2023" name="Cell">
        <title>Structural specializations of the sperm tail.</title>
        <authorList>
            <person name="Leung M.R."/>
            <person name="Zeng J."/>
            <person name="Wang X."/>
            <person name="Roelofs M.C."/>
            <person name="Huang W."/>
            <person name="Zenezini Chiozzi R."/>
            <person name="Hevler J.F."/>
            <person name="Heck A.J.R."/>
            <person name="Dutcher S.K."/>
            <person name="Brown A."/>
            <person name="Zhang R."/>
            <person name="Zeev-Ben-Mordehai T."/>
        </authorList>
    </citation>
    <scope>STRUCTURE BY ELECTRON MICROSCOPY (3.60 ANGSTROMS)</scope>
    <scope>FUNCTION</scope>
    <scope>SUBUNIT</scope>
    <scope>SUBCELLULAR LOCATION</scope>
</reference>
<comment type="function">
    <text evidence="3">Microtubule inner protein (MIP) part of the dynein-decorated doublet microtubules (DMTs) in flagella axoneme.</text>
</comment>
<comment type="subunit">
    <text evidence="3">Microtubule inner protein component of sperm flagellar doublet microtubules.</text>
</comment>
<comment type="subcellular location">
    <subcellularLocation>
        <location evidence="2">Nucleus</location>
    </subcellularLocation>
    <subcellularLocation>
        <location evidence="1">Cytoplasm</location>
    </subcellularLocation>
    <subcellularLocation>
        <location evidence="3">Cytoplasm</location>
        <location evidence="3">Cytoskeleton</location>
        <location evidence="3">Flagellum axoneme</location>
    </subcellularLocation>
    <text evidence="1">Present in the germ cell lineage at all stages.</text>
</comment>